<protein>
    <recommendedName>
        <fullName evidence="2">Formamidopyrimidine-DNA glycosylase</fullName>
        <shortName evidence="2">Fapy-DNA glycosylase</shortName>
        <ecNumber evidence="2">3.2.2.23</ecNumber>
    </recommendedName>
    <alternativeName>
        <fullName evidence="2">DNA-(apurinic or apyrimidinic site) lyase MutM</fullName>
        <shortName evidence="2">AP lyase MutM</shortName>
        <ecNumber evidence="2">4.2.99.18</ecNumber>
    </alternativeName>
</protein>
<feature type="initiator methionine" description="Removed" evidence="1">
    <location>
        <position position="1"/>
    </location>
</feature>
<feature type="chain" id="PRO_1000008683" description="Formamidopyrimidine-DNA glycosylase">
    <location>
        <begin position="2"/>
        <end position="272"/>
    </location>
</feature>
<feature type="zinc finger region" description="FPG-type" evidence="2">
    <location>
        <begin position="238"/>
        <end position="272"/>
    </location>
</feature>
<feature type="active site" description="Schiff-base intermediate with DNA" evidence="2">
    <location>
        <position position="2"/>
    </location>
</feature>
<feature type="active site" description="Proton donor" evidence="2">
    <location>
        <position position="3"/>
    </location>
</feature>
<feature type="active site" description="Proton donor; for beta-elimination activity" evidence="2">
    <location>
        <position position="58"/>
    </location>
</feature>
<feature type="active site" description="Proton donor; for delta-elimination activity" evidence="2">
    <location>
        <position position="262"/>
    </location>
</feature>
<feature type="binding site" evidence="2">
    <location>
        <position position="94"/>
    </location>
    <ligand>
        <name>DNA</name>
        <dbReference type="ChEBI" id="CHEBI:16991"/>
    </ligand>
</feature>
<feature type="binding site" evidence="2">
    <location>
        <position position="112"/>
    </location>
    <ligand>
        <name>DNA</name>
        <dbReference type="ChEBI" id="CHEBI:16991"/>
    </ligand>
</feature>
<feature type="binding site" evidence="2">
    <location>
        <position position="153"/>
    </location>
    <ligand>
        <name>DNA</name>
        <dbReference type="ChEBI" id="CHEBI:16991"/>
    </ligand>
</feature>
<proteinExistence type="inferred from homology"/>
<keyword id="KW-0227">DNA damage</keyword>
<keyword id="KW-0234">DNA repair</keyword>
<keyword id="KW-0238">DNA-binding</keyword>
<keyword id="KW-0326">Glycosidase</keyword>
<keyword id="KW-0378">Hydrolase</keyword>
<keyword id="KW-0456">Lyase</keyword>
<keyword id="KW-0479">Metal-binding</keyword>
<keyword id="KW-0511">Multifunctional enzyme</keyword>
<keyword id="KW-0862">Zinc</keyword>
<keyword id="KW-0863">Zinc-finger</keyword>
<name>FPG_BURM9</name>
<evidence type="ECO:0000250" key="1"/>
<evidence type="ECO:0000255" key="2">
    <source>
        <dbReference type="HAMAP-Rule" id="MF_00103"/>
    </source>
</evidence>
<sequence length="272" mass="30296">MPELPEVEVTRRGIEPFVAGRRVERVDVRTAMLRWPVPAGFAEMLRSREVLRVERRGKYLLFEVDAGWFIVHLGMTGTLRVLPNDAPPPAPAKHDHVDWIFDEFVLRFRDPRRFGAVLWHPRDAGDVHAHPLLASLGVEPFSAALLFGRTRGRTVSVKQALLAGDIVVGVGNIYASESLFRAGIRPTTAAGRVSLPRYERLADAVRATLADAIERGGSTLRDFVGSNGESGYFQLDCFVYDRAGEPCRVCGAPIRQIVQGQRSTYFCPNCQR</sequence>
<dbReference type="EC" id="3.2.2.23" evidence="2"/>
<dbReference type="EC" id="4.2.99.18" evidence="2"/>
<dbReference type="EMBL" id="CP000546">
    <property type="protein sequence ID" value="ABN01872.1"/>
    <property type="molecule type" value="Genomic_DNA"/>
</dbReference>
<dbReference type="RefSeq" id="WP_004195234.1">
    <property type="nucleotide sequence ID" value="NC_008836.1"/>
</dbReference>
<dbReference type="SMR" id="A2S6C0"/>
<dbReference type="GeneID" id="92980781"/>
<dbReference type="KEGG" id="bml:BMA10229_A1507"/>
<dbReference type="HOGENOM" id="CLU_038423_1_1_4"/>
<dbReference type="Proteomes" id="UP000002283">
    <property type="component" value="Chromosome I"/>
</dbReference>
<dbReference type="GO" id="GO:0034039">
    <property type="term" value="F:8-oxo-7,8-dihydroguanine DNA N-glycosylase activity"/>
    <property type="evidence" value="ECO:0007669"/>
    <property type="project" value="TreeGrafter"/>
</dbReference>
<dbReference type="GO" id="GO:0140078">
    <property type="term" value="F:class I DNA-(apurinic or apyrimidinic site) endonuclease activity"/>
    <property type="evidence" value="ECO:0007669"/>
    <property type="project" value="UniProtKB-EC"/>
</dbReference>
<dbReference type="GO" id="GO:0003684">
    <property type="term" value="F:damaged DNA binding"/>
    <property type="evidence" value="ECO:0007669"/>
    <property type="project" value="InterPro"/>
</dbReference>
<dbReference type="GO" id="GO:0008270">
    <property type="term" value="F:zinc ion binding"/>
    <property type="evidence" value="ECO:0007669"/>
    <property type="project" value="UniProtKB-UniRule"/>
</dbReference>
<dbReference type="GO" id="GO:0006284">
    <property type="term" value="P:base-excision repair"/>
    <property type="evidence" value="ECO:0007669"/>
    <property type="project" value="InterPro"/>
</dbReference>
<dbReference type="CDD" id="cd08966">
    <property type="entry name" value="EcFpg-like_N"/>
    <property type="match status" value="1"/>
</dbReference>
<dbReference type="FunFam" id="1.10.8.50:FF:000003">
    <property type="entry name" value="Formamidopyrimidine-DNA glycosylase"/>
    <property type="match status" value="1"/>
</dbReference>
<dbReference type="FunFam" id="3.20.190.10:FF:000001">
    <property type="entry name" value="Formamidopyrimidine-DNA glycosylase"/>
    <property type="match status" value="1"/>
</dbReference>
<dbReference type="Gene3D" id="1.10.8.50">
    <property type="match status" value="1"/>
</dbReference>
<dbReference type="Gene3D" id="3.20.190.10">
    <property type="entry name" value="MutM-like, N-terminal"/>
    <property type="match status" value="1"/>
</dbReference>
<dbReference type="HAMAP" id="MF_00103">
    <property type="entry name" value="Fapy_DNA_glycosyl"/>
    <property type="match status" value="1"/>
</dbReference>
<dbReference type="InterPro" id="IPR015886">
    <property type="entry name" value="DNA_glyclase/AP_lyase_DNA-bd"/>
</dbReference>
<dbReference type="InterPro" id="IPR015887">
    <property type="entry name" value="DNA_glyclase_Znf_dom_DNA_BS"/>
</dbReference>
<dbReference type="InterPro" id="IPR020629">
    <property type="entry name" value="Formamido-pyr_DNA_Glyclase"/>
</dbReference>
<dbReference type="InterPro" id="IPR012319">
    <property type="entry name" value="FPG_cat"/>
</dbReference>
<dbReference type="InterPro" id="IPR035937">
    <property type="entry name" value="MutM-like_N-ter"/>
</dbReference>
<dbReference type="InterPro" id="IPR010979">
    <property type="entry name" value="Ribosomal_uS13-like_H2TH"/>
</dbReference>
<dbReference type="InterPro" id="IPR000214">
    <property type="entry name" value="Znf_DNA_glyclase/AP_lyase"/>
</dbReference>
<dbReference type="InterPro" id="IPR010663">
    <property type="entry name" value="Znf_FPG/IleRS"/>
</dbReference>
<dbReference type="NCBIfam" id="TIGR00577">
    <property type="entry name" value="fpg"/>
    <property type="match status" value="1"/>
</dbReference>
<dbReference type="NCBIfam" id="NF002211">
    <property type="entry name" value="PRK01103.1"/>
    <property type="match status" value="1"/>
</dbReference>
<dbReference type="PANTHER" id="PTHR22993">
    <property type="entry name" value="FORMAMIDOPYRIMIDINE-DNA GLYCOSYLASE"/>
    <property type="match status" value="1"/>
</dbReference>
<dbReference type="PANTHER" id="PTHR22993:SF9">
    <property type="entry name" value="FORMAMIDOPYRIMIDINE-DNA GLYCOSYLASE"/>
    <property type="match status" value="1"/>
</dbReference>
<dbReference type="Pfam" id="PF01149">
    <property type="entry name" value="Fapy_DNA_glyco"/>
    <property type="match status" value="1"/>
</dbReference>
<dbReference type="Pfam" id="PF06831">
    <property type="entry name" value="H2TH"/>
    <property type="match status" value="1"/>
</dbReference>
<dbReference type="Pfam" id="PF06827">
    <property type="entry name" value="zf-FPG_IleRS"/>
    <property type="match status" value="1"/>
</dbReference>
<dbReference type="SMART" id="SM00898">
    <property type="entry name" value="Fapy_DNA_glyco"/>
    <property type="match status" value="1"/>
</dbReference>
<dbReference type="SMART" id="SM01232">
    <property type="entry name" value="H2TH"/>
    <property type="match status" value="1"/>
</dbReference>
<dbReference type="SUPFAM" id="SSF57716">
    <property type="entry name" value="Glucocorticoid receptor-like (DNA-binding domain)"/>
    <property type="match status" value="1"/>
</dbReference>
<dbReference type="SUPFAM" id="SSF81624">
    <property type="entry name" value="N-terminal domain of MutM-like DNA repair proteins"/>
    <property type="match status" value="1"/>
</dbReference>
<dbReference type="SUPFAM" id="SSF46946">
    <property type="entry name" value="S13-like H2TH domain"/>
    <property type="match status" value="1"/>
</dbReference>
<dbReference type="PROSITE" id="PS51068">
    <property type="entry name" value="FPG_CAT"/>
    <property type="match status" value="1"/>
</dbReference>
<dbReference type="PROSITE" id="PS01242">
    <property type="entry name" value="ZF_FPG_1"/>
    <property type="match status" value="1"/>
</dbReference>
<dbReference type="PROSITE" id="PS51066">
    <property type="entry name" value="ZF_FPG_2"/>
    <property type="match status" value="1"/>
</dbReference>
<comment type="function">
    <text evidence="2">Involved in base excision repair of DNA damaged by oxidation or by mutagenic agents. Acts as a DNA glycosylase that recognizes and removes damaged bases. Has a preference for oxidized purines, such as 7,8-dihydro-8-oxoguanine (8-oxoG). Has AP (apurinic/apyrimidinic) lyase activity and introduces nicks in the DNA strand. Cleaves the DNA backbone by beta-delta elimination to generate a single-strand break at the site of the removed base with both 3'- and 5'-phosphates.</text>
</comment>
<comment type="catalytic activity">
    <reaction evidence="2">
        <text>Hydrolysis of DNA containing ring-opened 7-methylguanine residues, releasing 2,6-diamino-4-hydroxy-5-(N-methyl)formamidopyrimidine.</text>
        <dbReference type="EC" id="3.2.2.23"/>
    </reaction>
</comment>
<comment type="catalytic activity">
    <reaction evidence="2">
        <text>2'-deoxyribonucleotide-(2'-deoxyribose 5'-phosphate)-2'-deoxyribonucleotide-DNA = a 3'-end 2'-deoxyribonucleotide-(2,3-dehydro-2,3-deoxyribose 5'-phosphate)-DNA + a 5'-end 5'-phospho-2'-deoxyribonucleoside-DNA + H(+)</text>
        <dbReference type="Rhea" id="RHEA:66592"/>
        <dbReference type="Rhea" id="RHEA-COMP:13180"/>
        <dbReference type="Rhea" id="RHEA-COMP:16897"/>
        <dbReference type="Rhea" id="RHEA-COMP:17067"/>
        <dbReference type="ChEBI" id="CHEBI:15378"/>
        <dbReference type="ChEBI" id="CHEBI:136412"/>
        <dbReference type="ChEBI" id="CHEBI:157695"/>
        <dbReference type="ChEBI" id="CHEBI:167181"/>
        <dbReference type="EC" id="4.2.99.18"/>
    </reaction>
</comment>
<comment type="cofactor">
    <cofactor evidence="2">
        <name>Zn(2+)</name>
        <dbReference type="ChEBI" id="CHEBI:29105"/>
    </cofactor>
    <text evidence="2">Binds 1 zinc ion per subunit.</text>
</comment>
<comment type="subunit">
    <text evidence="2">Monomer.</text>
</comment>
<comment type="similarity">
    <text evidence="2">Belongs to the FPG family.</text>
</comment>
<gene>
    <name evidence="2" type="primary">mutM</name>
    <name evidence="2" type="synonym">fpg</name>
    <name type="ordered locus">BMA10229_A1507</name>
</gene>
<reference key="1">
    <citation type="journal article" date="2010" name="Genome Biol. Evol.">
        <title>Continuing evolution of Burkholderia mallei through genome reduction and large-scale rearrangements.</title>
        <authorList>
            <person name="Losada L."/>
            <person name="Ronning C.M."/>
            <person name="DeShazer D."/>
            <person name="Woods D."/>
            <person name="Fedorova N."/>
            <person name="Kim H.S."/>
            <person name="Shabalina S.A."/>
            <person name="Pearson T.R."/>
            <person name="Brinkac L."/>
            <person name="Tan P."/>
            <person name="Nandi T."/>
            <person name="Crabtree J."/>
            <person name="Badger J."/>
            <person name="Beckstrom-Sternberg S."/>
            <person name="Saqib M."/>
            <person name="Schutzer S.E."/>
            <person name="Keim P."/>
            <person name="Nierman W.C."/>
        </authorList>
    </citation>
    <scope>NUCLEOTIDE SEQUENCE [LARGE SCALE GENOMIC DNA]</scope>
    <source>
        <strain>NCTC 10229</strain>
    </source>
</reference>
<organism>
    <name type="scientific">Burkholderia mallei (strain NCTC 10229)</name>
    <dbReference type="NCBI Taxonomy" id="412022"/>
    <lineage>
        <taxon>Bacteria</taxon>
        <taxon>Pseudomonadati</taxon>
        <taxon>Pseudomonadota</taxon>
        <taxon>Betaproteobacteria</taxon>
        <taxon>Burkholderiales</taxon>
        <taxon>Burkholderiaceae</taxon>
        <taxon>Burkholderia</taxon>
        <taxon>pseudomallei group</taxon>
    </lineage>
</organism>
<accession>A2S6C0</accession>